<keyword id="KW-1003">Cell membrane</keyword>
<keyword id="KW-1015">Disulfide bond</keyword>
<keyword id="KW-0297">G-protein coupled receptor</keyword>
<keyword id="KW-0449">Lipoprotein</keyword>
<keyword id="KW-0472">Membrane</keyword>
<keyword id="KW-0564">Palmitate</keyword>
<keyword id="KW-0675">Receptor</keyword>
<keyword id="KW-1185">Reference proteome</keyword>
<keyword id="KW-0807">Transducer</keyword>
<keyword id="KW-0812">Transmembrane</keyword>
<keyword id="KW-1133">Transmembrane helix</keyword>
<sequence>MSGPAMVHQEPYSVQATAAIASAITFLILFTIFGNALVILAVLTSRSLRAPQNLFLVSLAAADILVATLIIPFSLANELLGYWYFWRAWCEVYLALDVLFCTSSIVHLCAISLDRYWAVSRALEYNSKRTPRRIKCIILTVWLIAAVISLPPLIYKGDQRPEPHGLPQCELNQEAWYILASSIGSFFAPCLIMILVYLRIYVIAKRSHCRGLGAKRGSGEGESKKPHPAAGGVPASAKVPTLVSPLSSVGEANGHPKPPREKEEGETPEDPEARALPPNWSALPRSVQDQKKGTSGATAEKGAEEDEEEVEECEPQTLPASPASVFNPPLQQPQTSRVLATLRGQVLLSKNVGVASGQWWRRRTQLSREKRFTFVLAVVIGVFVVCWFPFFFSYSLGAICPQHCKVPHGLFQFFFWIGYCNSSLNPVIYTIFNQDFRRAFRRILCRQWTQTGW</sequence>
<protein>
    <recommendedName>
        <fullName>Alpha-2B adrenergic receptor</fullName>
    </recommendedName>
    <alternativeName>
        <fullName>Alpha-2B adrenoreceptor</fullName>
        <shortName>Alpha-2B adrenoceptor</shortName>
        <shortName>Alpha-2BAR</shortName>
    </alternativeName>
</protein>
<proteinExistence type="evidence at protein level"/>
<comment type="function">
    <text>Alpha-2 adrenergic receptors mediate the catecholamine-induced inhibition of adenylate cyclase through the action of G proteins.</text>
</comment>
<comment type="subunit">
    <text evidence="2">Interacts with RAB26. Interacts with PPP1R9B. Interacts with GGA1, GGA2 and GGA3.</text>
</comment>
<comment type="interaction">
    <interactant intactId="EBI-491084">
        <id>P30545</id>
    </interactant>
    <interactant intactId="EBI-491065">
        <id>Q14232</id>
        <label>EIF2B1</label>
    </interactant>
    <organismsDiffer>true</organismsDiffer>
    <experiments>2</experiments>
</comment>
<comment type="subcellular location">
    <subcellularLocation>
        <location evidence="2">Cell membrane</location>
        <topology evidence="2">Multi-pass membrane protein</topology>
    </subcellularLocation>
    <text evidence="2">Interaction with RAB26, GGA1, GGA2 and GGA3 mediates transport from the Golgi to the cell membrane.</text>
</comment>
<comment type="similarity">
    <text evidence="4">Belongs to the G-protein coupled receptor 1 family. Adrenergic receptor subfamily. ADRA2B sub-subfamily.</text>
</comment>
<comment type="sequence caution" evidence="6">
    <conflict type="erroneous initiation">
        <sequence resource="EMBL-CDS" id="AAA37131"/>
    </conflict>
    <text>Truncated N-terminus.</text>
</comment>
<accession>P30545</accession>
<accession>F8VQ23</accession>
<dbReference type="EMBL" id="M94583">
    <property type="protein sequence ID" value="AAA73895.1"/>
    <property type="molecule type" value="Genomic_DNA"/>
</dbReference>
<dbReference type="EMBL" id="L00979">
    <property type="protein sequence ID" value="AAA37131.1"/>
    <property type="status" value="ALT_INIT"/>
    <property type="molecule type" value="Genomic_DNA"/>
</dbReference>
<dbReference type="EMBL" id="AL731836">
    <property type="status" value="NOT_ANNOTATED_CDS"/>
    <property type="molecule type" value="Genomic_DNA"/>
</dbReference>
<dbReference type="PIR" id="S28221">
    <property type="entry name" value="S28221"/>
</dbReference>
<dbReference type="RefSeq" id="NP_033763.2">
    <property type="nucleotide sequence ID" value="NM_009633.3"/>
</dbReference>
<dbReference type="SMR" id="P30545"/>
<dbReference type="FunCoup" id="P30545">
    <property type="interactions" value="1082"/>
</dbReference>
<dbReference type="IntAct" id="P30545">
    <property type="interactions" value="1"/>
</dbReference>
<dbReference type="STRING" id="10090.ENSMUSP00000071798"/>
<dbReference type="BindingDB" id="P30545"/>
<dbReference type="ChEMBL" id="CHEMBL2405"/>
<dbReference type="DrugCentral" id="P30545"/>
<dbReference type="iPTMnet" id="P30545"/>
<dbReference type="PhosphoSitePlus" id="P30545"/>
<dbReference type="PaxDb" id="10090-ENSMUSP00000071798"/>
<dbReference type="Antibodypedia" id="72874">
    <property type="antibodies" value="135 antibodies from 27 providers"/>
</dbReference>
<dbReference type="DNASU" id="11552"/>
<dbReference type="Ensembl" id="ENSMUST00000071902.5">
    <property type="protein sequence ID" value="ENSMUSP00000071798.5"/>
    <property type="gene ID" value="ENSMUSG00000058620.6"/>
</dbReference>
<dbReference type="GeneID" id="11552"/>
<dbReference type="KEGG" id="mmu:11552"/>
<dbReference type="AGR" id="MGI:87935"/>
<dbReference type="CTD" id="151"/>
<dbReference type="MGI" id="MGI:87935">
    <property type="gene designation" value="Adra2b"/>
</dbReference>
<dbReference type="VEuPathDB" id="HostDB:ENSMUSG00000058620"/>
<dbReference type="eggNOG" id="KOG3656">
    <property type="taxonomic scope" value="Eukaryota"/>
</dbReference>
<dbReference type="GeneTree" id="ENSGT00940000161915"/>
<dbReference type="InParanoid" id="P30545"/>
<dbReference type="OMA" id="ANPWKRK"/>
<dbReference type="OrthoDB" id="5975661at2759"/>
<dbReference type="PhylomeDB" id="P30545"/>
<dbReference type="TreeFam" id="TF316350"/>
<dbReference type="Reactome" id="R-MMU-390696">
    <property type="pathway name" value="Adrenoceptors"/>
</dbReference>
<dbReference type="Reactome" id="R-MMU-392023">
    <property type="pathway name" value="Adrenaline signalling through Alpha-2 adrenergic receptor"/>
</dbReference>
<dbReference type="Reactome" id="R-MMU-418594">
    <property type="pathway name" value="G alpha (i) signalling events"/>
</dbReference>
<dbReference type="Reactome" id="R-MMU-418597">
    <property type="pathway name" value="G alpha (z) signalling events"/>
</dbReference>
<dbReference type="BioGRID-ORCS" id="11552">
    <property type="hits" value="5 hits in 79 CRISPR screens"/>
</dbReference>
<dbReference type="PRO" id="PR:P30545"/>
<dbReference type="Proteomes" id="UP000000589">
    <property type="component" value="Chromosome 2"/>
</dbReference>
<dbReference type="RNAct" id="P30545">
    <property type="molecule type" value="protein"/>
</dbReference>
<dbReference type="Bgee" id="ENSMUSG00000058620">
    <property type="expression patterns" value="Expressed in placenta labyrinth and 66 other cell types or tissues"/>
</dbReference>
<dbReference type="GO" id="GO:0009986">
    <property type="term" value="C:cell surface"/>
    <property type="evidence" value="ECO:0000250"/>
    <property type="project" value="UniProtKB"/>
</dbReference>
<dbReference type="GO" id="GO:0005886">
    <property type="term" value="C:plasma membrane"/>
    <property type="evidence" value="ECO:0007669"/>
    <property type="project" value="UniProtKB-SubCell"/>
</dbReference>
<dbReference type="GO" id="GO:0004935">
    <property type="term" value="F:adrenergic receptor activity"/>
    <property type="evidence" value="ECO:0000315"/>
    <property type="project" value="MGI"/>
</dbReference>
<dbReference type="GO" id="GO:0004938">
    <property type="term" value="F:alpha2-adrenergic receptor activity"/>
    <property type="evidence" value="ECO:0000314"/>
    <property type="project" value="MGI"/>
</dbReference>
<dbReference type="GO" id="GO:0001525">
    <property type="term" value="P:angiogenesis"/>
    <property type="evidence" value="ECO:0000315"/>
    <property type="project" value="MGI"/>
</dbReference>
<dbReference type="GO" id="GO:0007186">
    <property type="term" value="P:G protein-coupled receptor signaling pathway"/>
    <property type="evidence" value="ECO:0000314"/>
    <property type="project" value="MGI"/>
</dbReference>
<dbReference type="GO" id="GO:0000165">
    <property type="term" value="P:MAPK cascade"/>
    <property type="evidence" value="ECO:0000315"/>
    <property type="project" value="MGI"/>
</dbReference>
<dbReference type="GO" id="GO:0030168">
    <property type="term" value="P:platelet activation"/>
    <property type="evidence" value="ECO:0007669"/>
    <property type="project" value="InterPro"/>
</dbReference>
<dbReference type="GO" id="GO:0006940">
    <property type="term" value="P:regulation of smooth muscle contraction"/>
    <property type="evidence" value="ECO:0007669"/>
    <property type="project" value="InterPro"/>
</dbReference>
<dbReference type="GO" id="GO:0019229">
    <property type="term" value="P:regulation of vasoconstriction"/>
    <property type="evidence" value="ECO:0007669"/>
    <property type="project" value="InterPro"/>
</dbReference>
<dbReference type="CDD" id="cd15321">
    <property type="entry name" value="7tmA_alpha2B_AR"/>
    <property type="match status" value="1"/>
</dbReference>
<dbReference type="FunFam" id="1.20.1070.10:FF:000185">
    <property type="entry name" value="Alpha-2B adrenergic receptor"/>
    <property type="match status" value="1"/>
</dbReference>
<dbReference type="FunFam" id="1.20.1070.10:FF:000100">
    <property type="entry name" value="alpha-2B adrenergic receptor"/>
    <property type="match status" value="1"/>
</dbReference>
<dbReference type="Gene3D" id="1.20.1070.10">
    <property type="entry name" value="Rhodopsin 7-helix transmembrane proteins"/>
    <property type="match status" value="2"/>
</dbReference>
<dbReference type="InterPro" id="IPR002233">
    <property type="entry name" value="ADR_fam"/>
</dbReference>
<dbReference type="InterPro" id="IPR000207">
    <property type="entry name" value="ADRA2B_rcpt"/>
</dbReference>
<dbReference type="InterPro" id="IPR000276">
    <property type="entry name" value="GPCR_Rhodpsn"/>
</dbReference>
<dbReference type="InterPro" id="IPR017452">
    <property type="entry name" value="GPCR_Rhodpsn_7TM"/>
</dbReference>
<dbReference type="PANTHER" id="PTHR24248">
    <property type="entry name" value="ADRENERGIC RECEPTOR-RELATED G-PROTEIN COUPLED RECEPTOR"/>
    <property type="match status" value="1"/>
</dbReference>
<dbReference type="PANTHER" id="PTHR24248:SF130">
    <property type="entry name" value="ALPHA-2B ADRENERGIC RECEPTOR"/>
    <property type="match status" value="1"/>
</dbReference>
<dbReference type="Pfam" id="PF00001">
    <property type="entry name" value="7tm_1"/>
    <property type="match status" value="1"/>
</dbReference>
<dbReference type="PRINTS" id="PR01103">
    <property type="entry name" value="ADRENERGICR"/>
</dbReference>
<dbReference type="PRINTS" id="PR00559">
    <property type="entry name" value="ADRENRGCA2BR"/>
</dbReference>
<dbReference type="PRINTS" id="PR00237">
    <property type="entry name" value="GPCRRHODOPSN"/>
</dbReference>
<dbReference type="SMART" id="SM01381">
    <property type="entry name" value="7TM_GPCR_Srsx"/>
    <property type="match status" value="1"/>
</dbReference>
<dbReference type="SUPFAM" id="SSF81321">
    <property type="entry name" value="Family A G protein-coupled receptor-like"/>
    <property type="match status" value="1"/>
</dbReference>
<dbReference type="PROSITE" id="PS00237">
    <property type="entry name" value="G_PROTEIN_RECEP_F1_1"/>
    <property type="match status" value="1"/>
</dbReference>
<dbReference type="PROSITE" id="PS50262">
    <property type="entry name" value="G_PROTEIN_RECEP_F1_2"/>
    <property type="match status" value="1"/>
</dbReference>
<feature type="chain" id="PRO_0000069096" description="Alpha-2B adrenergic receptor">
    <location>
        <begin position="1"/>
        <end position="453"/>
    </location>
</feature>
<feature type="topological domain" description="Extracellular" evidence="1">
    <location>
        <begin position="1"/>
        <end position="17"/>
    </location>
</feature>
<feature type="transmembrane region" description="Helical; Name=1" evidence="1">
    <location>
        <begin position="18"/>
        <end position="42"/>
    </location>
</feature>
<feature type="topological domain" description="Cytoplasmic" evidence="1">
    <location>
        <begin position="43"/>
        <end position="54"/>
    </location>
</feature>
<feature type="transmembrane region" description="Helical; Name=2" evidence="1">
    <location>
        <begin position="55"/>
        <end position="80"/>
    </location>
</feature>
<feature type="topological domain" description="Extracellular" evidence="1">
    <location>
        <begin position="81"/>
        <end position="90"/>
    </location>
</feature>
<feature type="transmembrane region" description="Helical; Name=3" evidence="1">
    <location>
        <begin position="91"/>
        <end position="113"/>
    </location>
</feature>
<feature type="topological domain" description="Cytoplasmic" evidence="1">
    <location>
        <begin position="114"/>
        <end position="135"/>
    </location>
</feature>
<feature type="transmembrane region" description="Helical; Name=4" evidence="1">
    <location>
        <begin position="136"/>
        <end position="158"/>
    </location>
</feature>
<feature type="topological domain" description="Extracellular" evidence="1">
    <location>
        <begin position="159"/>
        <end position="174"/>
    </location>
</feature>
<feature type="transmembrane region" description="Helical; Name=5" evidence="1">
    <location>
        <begin position="175"/>
        <end position="198"/>
    </location>
</feature>
<feature type="topological domain" description="Cytoplasmic" evidence="1">
    <location>
        <begin position="199"/>
        <end position="375"/>
    </location>
</feature>
<feature type="transmembrane region" description="Helical; Name=6" evidence="1">
    <location>
        <begin position="376"/>
        <end position="399"/>
    </location>
</feature>
<feature type="topological domain" description="Extracellular" evidence="1">
    <location>
        <begin position="400"/>
        <end position="408"/>
    </location>
</feature>
<feature type="transmembrane region" description="Helical; Name=7" evidence="1">
    <location>
        <begin position="409"/>
        <end position="432"/>
    </location>
</feature>
<feature type="topological domain" description="Cytoplasmic" evidence="1">
    <location>
        <begin position="433"/>
        <end position="453"/>
    </location>
</feature>
<feature type="region of interest" description="Disordered" evidence="5">
    <location>
        <begin position="214"/>
        <end position="329"/>
    </location>
</feature>
<feature type="compositionally biased region" description="Acidic residues" evidence="5">
    <location>
        <begin position="303"/>
        <end position="314"/>
    </location>
</feature>
<feature type="site" description="Implicated in ligand binding" evidence="1">
    <location>
        <position position="97"/>
    </location>
</feature>
<feature type="site" description="Implicated in catechol agonist binding" evidence="1">
    <location>
        <position position="181"/>
    </location>
</feature>
<feature type="site" description="Implicated in catechol agonist binding" evidence="1">
    <location>
        <position position="185"/>
    </location>
</feature>
<feature type="lipid moiety-binding region" description="S-palmitoyl cysteine" evidence="3">
    <location>
        <position position="445"/>
    </location>
</feature>
<feature type="disulfide bond" evidence="4">
    <location>
        <begin position="90"/>
        <end position="169"/>
    </location>
</feature>
<feature type="sequence conflict" description="In Ref. 1; AAA73895." evidence="6" ref="1">
    <original>V</original>
    <variation>L</variation>
    <location>
        <position position="202"/>
    </location>
</feature>
<feature type="sequence conflict" description="In Ref. 1; AAA73895." evidence="6" ref="1">
    <original>H</original>
    <variation>RPG</variation>
    <location>
        <position position="227"/>
    </location>
</feature>
<evidence type="ECO:0000250" key="1"/>
<evidence type="ECO:0000250" key="2">
    <source>
        <dbReference type="UniProtKB" id="P18089"/>
    </source>
</evidence>
<evidence type="ECO:0000255" key="3"/>
<evidence type="ECO:0000255" key="4">
    <source>
        <dbReference type="PROSITE-ProRule" id="PRU00521"/>
    </source>
</evidence>
<evidence type="ECO:0000256" key="5">
    <source>
        <dbReference type="SAM" id="MobiDB-lite"/>
    </source>
</evidence>
<evidence type="ECO:0000305" key="6"/>
<organism>
    <name type="scientific">Mus musculus</name>
    <name type="common">Mouse</name>
    <dbReference type="NCBI Taxonomy" id="10090"/>
    <lineage>
        <taxon>Eukaryota</taxon>
        <taxon>Metazoa</taxon>
        <taxon>Chordata</taxon>
        <taxon>Craniata</taxon>
        <taxon>Vertebrata</taxon>
        <taxon>Euteleostomi</taxon>
        <taxon>Mammalia</taxon>
        <taxon>Eutheria</taxon>
        <taxon>Euarchontoglires</taxon>
        <taxon>Glires</taxon>
        <taxon>Rodentia</taxon>
        <taxon>Myomorpha</taxon>
        <taxon>Muroidea</taxon>
        <taxon>Muridae</taxon>
        <taxon>Murinae</taxon>
        <taxon>Mus</taxon>
        <taxon>Mus</taxon>
    </lineage>
</organism>
<reference key="1">
    <citation type="journal article" date="1992" name="Biochim. Biophys. Acta">
        <title>Molecular cloning and characterization of a mouse alpha 2C2 adrenoceptor subtype gene.</title>
        <authorList>
            <person name="Chen W.-M."/>
            <person name="Chang A.C."/>
            <person name="Shie B.J."/>
            <person name="Chang Y.-H."/>
            <person name="Chang N.-C.A."/>
        </authorList>
    </citation>
    <scope>NUCLEOTIDE SEQUENCE [GENOMIC DNA]</scope>
    <source>
        <strain>DBA/2J</strain>
        <tissue>Liver</tissue>
    </source>
</reference>
<reference key="2">
    <citation type="journal article" date="1992" name="Biochem. Biophys. Res. Commun.">
        <title>Cloning and expression of the mouse homolog of the human alpha 2-C2 adrenergic receptor.</title>
        <authorList>
            <person name="Chruscinski A.J."/>
            <person name="Link R.E."/>
            <person name="Daunt D.A."/>
            <person name="Barsh G.S."/>
            <person name="Kobilka B.K."/>
        </authorList>
    </citation>
    <scope>NUCLEOTIDE SEQUENCE [GENOMIC DNA]</scope>
</reference>
<reference key="3">
    <citation type="journal article" date="2009" name="PLoS Biol.">
        <title>Lineage-specific biology revealed by a finished genome assembly of the mouse.</title>
        <authorList>
            <person name="Church D.M."/>
            <person name="Goodstadt L."/>
            <person name="Hillier L.W."/>
            <person name="Zody M.C."/>
            <person name="Goldstein S."/>
            <person name="She X."/>
            <person name="Bult C.J."/>
            <person name="Agarwala R."/>
            <person name="Cherry J.L."/>
            <person name="DiCuccio M."/>
            <person name="Hlavina W."/>
            <person name="Kapustin Y."/>
            <person name="Meric P."/>
            <person name="Maglott D."/>
            <person name="Birtle Z."/>
            <person name="Marques A.C."/>
            <person name="Graves T."/>
            <person name="Zhou S."/>
            <person name="Teague B."/>
            <person name="Potamousis K."/>
            <person name="Churas C."/>
            <person name="Place M."/>
            <person name="Herschleb J."/>
            <person name="Runnheim R."/>
            <person name="Forrest D."/>
            <person name="Amos-Landgraf J."/>
            <person name="Schwartz D.C."/>
            <person name="Cheng Z."/>
            <person name="Lindblad-Toh K."/>
            <person name="Eichler E.E."/>
            <person name="Ponting C.P."/>
        </authorList>
    </citation>
    <scope>NUCLEOTIDE SEQUENCE [LARGE SCALE GENOMIC DNA]</scope>
    <source>
        <strain>C57BL/6J</strain>
    </source>
</reference>
<gene>
    <name type="primary">Adra2b</name>
</gene>
<name>ADA2B_MOUSE</name>